<sequence length="55" mass="6394">MAKGIREKIRLVSSAGTGHFYTTDKNKRNMPGKFEIKKYDPVVRQHVVYKEAKIK</sequence>
<keyword id="KW-0687">Ribonucleoprotein</keyword>
<keyword id="KW-0689">Ribosomal protein</keyword>
<evidence type="ECO:0000255" key="1">
    <source>
        <dbReference type="HAMAP-Rule" id="MF_00294"/>
    </source>
</evidence>
<evidence type="ECO:0000305" key="2"/>
<feature type="chain" id="PRO_1000078925" description="Large ribosomal subunit protein bL33">
    <location>
        <begin position="1"/>
        <end position="55"/>
    </location>
</feature>
<gene>
    <name evidence="1" type="primary">rpmG</name>
    <name type="ordered locus">VC0395_A2600</name>
    <name type="ordered locus">VC395_0251</name>
</gene>
<accession>A5F405</accession>
<accession>C3M397</accession>
<reference key="1">
    <citation type="submission" date="2007-03" db="EMBL/GenBank/DDBJ databases">
        <authorList>
            <person name="Heidelberg J."/>
        </authorList>
    </citation>
    <scope>NUCLEOTIDE SEQUENCE [LARGE SCALE GENOMIC DNA]</scope>
    <source>
        <strain>ATCC 39541 / Classical Ogawa 395 / O395</strain>
    </source>
</reference>
<reference key="2">
    <citation type="journal article" date="2008" name="PLoS ONE">
        <title>A recalibrated molecular clock and independent origins for the cholera pandemic clones.</title>
        <authorList>
            <person name="Feng L."/>
            <person name="Reeves P.R."/>
            <person name="Lan R."/>
            <person name="Ren Y."/>
            <person name="Gao C."/>
            <person name="Zhou Z."/>
            <person name="Ren Y."/>
            <person name="Cheng J."/>
            <person name="Wang W."/>
            <person name="Wang J."/>
            <person name="Qian W."/>
            <person name="Li D."/>
            <person name="Wang L."/>
        </authorList>
    </citation>
    <scope>NUCLEOTIDE SEQUENCE [LARGE SCALE GENOMIC DNA]</scope>
    <source>
        <strain>ATCC 39541 / Classical Ogawa 395 / O395</strain>
    </source>
</reference>
<comment type="similarity">
    <text evidence="1">Belongs to the bacterial ribosomal protein bL33 family.</text>
</comment>
<proteinExistence type="inferred from homology"/>
<dbReference type="EMBL" id="CP000627">
    <property type="protein sequence ID" value="ABQ20820.1"/>
    <property type="molecule type" value="Genomic_DNA"/>
</dbReference>
<dbReference type="EMBL" id="CP001235">
    <property type="protein sequence ID" value="ACP08276.1"/>
    <property type="molecule type" value="Genomic_DNA"/>
</dbReference>
<dbReference type="RefSeq" id="WP_001051801.1">
    <property type="nucleotide sequence ID" value="NZ_JAACZH010000028.1"/>
</dbReference>
<dbReference type="SMR" id="A5F405"/>
<dbReference type="GeneID" id="93953789"/>
<dbReference type="KEGG" id="vco:VC0395_A2600"/>
<dbReference type="KEGG" id="vcr:VC395_0251"/>
<dbReference type="PATRIC" id="fig|345073.21.peg.240"/>
<dbReference type="eggNOG" id="COG0267">
    <property type="taxonomic scope" value="Bacteria"/>
</dbReference>
<dbReference type="HOGENOM" id="CLU_190949_1_1_6"/>
<dbReference type="OrthoDB" id="21586at2"/>
<dbReference type="Proteomes" id="UP000000249">
    <property type="component" value="Chromosome 2"/>
</dbReference>
<dbReference type="GO" id="GO:0022625">
    <property type="term" value="C:cytosolic large ribosomal subunit"/>
    <property type="evidence" value="ECO:0007669"/>
    <property type="project" value="TreeGrafter"/>
</dbReference>
<dbReference type="GO" id="GO:0003735">
    <property type="term" value="F:structural constituent of ribosome"/>
    <property type="evidence" value="ECO:0007669"/>
    <property type="project" value="InterPro"/>
</dbReference>
<dbReference type="GO" id="GO:0006412">
    <property type="term" value="P:translation"/>
    <property type="evidence" value="ECO:0007669"/>
    <property type="project" value="UniProtKB-UniRule"/>
</dbReference>
<dbReference type="FunFam" id="2.20.28.120:FF:000001">
    <property type="entry name" value="50S ribosomal protein L33"/>
    <property type="match status" value="1"/>
</dbReference>
<dbReference type="Gene3D" id="2.20.28.120">
    <property type="entry name" value="Ribosomal protein L33"/>
    <property type="match status" value="1"/>
</dbReference>
<dbReference type="HAMAP" id="MF_00294">
    <property type="entry name" value="Ribosomal_bL33"/>
    <property type="match status" value="1"/>
</dbReference>
<dbReference type="InterPro" id="IPR001705">
    <property type="entry name" value="Ribosomal_bL33"/>
</dbReference>
<dbReference type="InterPro" id="IPR018264">
    <property type="entry name" value="Ribosomal_bL33_CS"/>
</dbReference>
<dbReference type="InterPro" id="IPR038584">
    <property type="entry name" value="Ribosomal_bL33_sf"/>
</dbReference>
<dbReference type="InterPro" id="IPR011332">
    <property type="entry name" value="Ribosomal_zn-bd"/>
</dbReference>
<dbReference type="NCBIfam" id="NF001860">
    <property type="entry name" value="PRK00595.1"/>
    <property type="match status" value="1"/>
</dbReference>
<dbReference type="NCBIfam" id="TIGR01023">
    <property type="entry name" value="rpmG_bact"/>
    <property type="match status" value="1"/>
</dbReference>
<dbReference type="PANTHER" id="PTHR15238">
    <property type="entry name" value="54S RIBOSOMAL PROTEIN L39, MITOCHONDRIAL"/>
    <property type="match status" value="1"/>
</dbReference>
<dbReference type="PANTHER" id="PTHR15238:SF1">
    <property type="entry name" value="LARGE RIBOSOMAL SUBUNIT PROTEIN BL33M"/>
    <property type="match status" value="1"/>
</dbReference>
<dbReference type="Pfam" id="PF00471">
    <property type="entry name" value="Ribosomal_L33"/>
    <property type="match status" value="1"/>
</dbReference>
<dbReference type="SUPFAM" id="SSF57829">
    <property type="entry name" value="Zn-binding ribosomal proteins"/>
    <property type="match status" value="1"/>
</dbReference>
<dbReference type="PROSITE" id="PS00582">
    <property type="entry name" value="RIBOSOMAL_L33"/>
    <property type="match status" value="1"/>
</dbReference>
<name>RL33_VIBC3</name>
<organism>
    <name type="scientific">Vibrio cholerae serotype O1 (strain ATCC 39541 / Classical Ogawa 395 / O395)</name>
    <dbReference type="NCBI Taxonomy" id="345073"/>
    <lineage>
        <taxon>Bacteria</taxon>
        <taxon>Pseudomonadati</taxon>
        <taxon>Pseudomonadota</taxon>
        <taxon>Gammaproteobacteria</taxon>
        <taxon>Vibrionales</taxon>
        <taxon>Vibrionaceae</taxon>
        <taxon>Vibrio</taxon>
    </lineage>
</organism>
<protein>
    <recommendedName>
        <fullName evidence="1">Large ribosomal subunit protein bL33</fullName>
    </recommendedName>
    <alternativeName>
        <fullName evidence="2">50S ribosomal protein L33</fullName>
    </alternativeName>
</protein>